<name>RECO_STAHJ</name>
<gene>
    <name evidence="1" type="primary">recO</name>
    <name type="ordered locus">SH1350</name>
</gene>
<evidence type="ECO:0000255" key="1">
    <source>
        <dbReference type="HAMAP-Rule" id="MF_00201"/>
    </source>
</evidence>
<sequence length="250" mass="28958">MLEKQKGIIIKSVDYGESDKIITILNEHGAKIPLMVRRAKKSKTGLQAHTQLFVYGLFIYNKWKGMGTLSSVDVINQYYDLRLDIFNSSYATLCTEAIERSMDNDDISPFHYKLLHFVLEKISNGDSAQLMSIIVLLKCMNRFGFTAFFNHSAISNSYDQSKLVAYSFVYDGTILESELYKDPHAFRISNKTLYLLDVLQKLPIDKMNQFNISQEILDEMSELILLIYKEYAGMYFKGQKLINQLKRIEY</sequence>
<reference key="1">
    <citation type="journal article" date="2005" name="J. Bacteriol.">
        <title>Whole-genome sequencing of Staphylococcus haemolyticus uncovers the extreme plasticity of its genome and the evolution of human-colonizing staphylococcal species.</title>
        <authorList>
            <person name="Takeuchi F."/>
            <person name="Watanabe S."/>
            <person name="Baba T."/>
            <person name="Yuzawa H."/>
            <person name="Ito T."/>
            <person name="Morimoto Y."/>
            <person name="Kuroda M."/>
            <person name="Cui L."/>
            <person name="Takahashi M."/>
            <person name="Ankai A."/>
            <person name="Baba S."/>
            <person name="Fukui S."/>
            <person name="Lee J.C."/>
            <person name="Hiramatsu K."/>
        </authorList>
    </citation>
    <scope>NUCLEOTIDE SEQUENCE [LARGE SCALE GENOMIC DNA]</scope>
    <source>
        <strain>JCSC1435</strain>
    </source>
</reference>
<dbReference type="EMBL" id="AP006716">
    <property type="protein sequence ID" value="BAE04659.1"/>
    <property type="molecule type" value="Genomic_DNA"/>
</dbReference>
<dbReference type="RefSeq" id="WP_011275646.1">
    <property type="nucleotide sequence ID" value="NC_007168.1"/>
</dbReference>
<dbReference type="SMR" id="Q4L6R6"/>
<dbReference type="GeneID" id="93780750"/>
<dbReference type="KEGG" id="sha:SH1350"/>
<dbReference type="eggNOG" id="COG1381">
    <property type="taxonomic scope" value="Bacteria"/>
</dbReference>
<dbReference type="HOGENOM" id="CLU_066632_4_0_9"/>
<dbReference type="OrthoDB" id="9797083at2"/>
<dbReference type="Proteomes" id="UP000000543">
    <property type="component" value="Chromosome"/>
</dbReference>
<dbReference type="GO" id="GO:0043590">
    <property type="term" value="C:bacterial nucleoid"/>
    <property type="evidence" value="ECO:0007669"/>
    <property type="project" value="TreeGrafter"/>
</dbReference>
<dbReference type="GO" id="GO:0006310">
    <property type="term" value="P:DNA recombination"/>
    <property type="evidence" value="ECO:0007669"/>
    <property type="project" value="UniProtKB-UniRule"/>
</dbReference>
<dbReference type="GO" id="GO:0006302">
    <property type="term" value="P:double-strand break repair"/>
    <property type="evidence" value="ECO:0007669"/>
    <property type="project" value="TreeGrafter"/>
</dbReference>
<dbReference type="Gene3D" id="2.40.50.140">
    <property type="entry name" value="Nucleic acid-binding proteins"/>
    <property type="match status" value="1"/>
</dbReference>
<dbReference type="HAMAP" id="MF_00201">
    <property type="entry name" value="RecO"/>
    <property type="match status" value="1"/>
</dbReference>
<dbReference type="InterPro" id="IPR037278">
    <property type="entry name" value="ARFGAP/RecO"/>
</dbReference>
<dbReference type="InterPro" id="IPR022572">
    <property type="entry name" value="DNA_rep/recomb_RecO_N"/>
</dbReference>
<dbReference type="InterPro" id="IPR012340">
    <property type="entry name" value="NA-bd_OB-fold"/>
</dbReference>
<dbReference type="InterPro" id="IPR003717">
    <property type="entry name" value="RecO"/>
</dbReference>
<dbReference type="NCBIfam" id="TIGR00613">
    <property type="entry name" value="reco"/>
    <property type="match status" value="1"/>
</dbReference>
<dbReference type="PANTHER" id="PTHR33991">
    <property type="entry name" value="DNA REPAIR PROTEIN RECO"/>
    <property type="match status" value="1"/>
</dbReference>
<dbReference type="PANTHER" id="PTHR33991:SF1">
    <property type="entry name" value="DNA REPAIR PROTEIN RECO"/>
    <property type="match status" value="1"/>
</dbReference>
<dbReference type="Pfam" id="PF02565">
    <property type="entry name" value="RecO_C"/>
    <property type="match status" value="1"/>
</dbReference>
<dbReference type="Pfam" id="PF11967">
    <property type="entry name" value="RecO_N"/>
    <property type="match status" value="1"/>
</dbReference>
<dbReference type="SUPFAM" id="SSF57863">
    <property type="entry name" value="ArfGap/RecO-like zinc finger"/>
    <property type="match status" value="1"/>
</dbReference>
<dbReference type="SUPFAM" id="SSF50249">
    <property type="entry name" value="Nucleic acid-binding proteins"/>
    <property type="match status" value="1"/>
</dbReference>
<protein>
    <recommendedName>
        <fullName evidence="1">DNA repair protein RecO</fullName>
    </recommendedName>
    <alternativeName>
        <fullName evidence="1">Recombination protein O</fullName>
    </alternativeName>
</protein>
<proteinExistence type="inferred from homology"/>
<accession>Q4L6R6</accession>
<comment type="function">
    <text evidence="1">Involved in DNA repair and RecF pathway recombination.</text>
</comment>
<comment type="similarity">
    <text evidence="1">Belongs to the RecO family.</text>
</comment>
<feature type="chain" id="PRO_0000205003" description="DNA repair protein RecO">
    <location>
        <begin position="1"/>
        <end position="250"/>
    </location>
</feature>
<organism>
    <name type="scientific">Staphylococcus haemolyticus (strain JCSC1435)</name>
    <dbReference type="NCBI Taxonomy" id="279808"/>
    <lineage>
        <taxon>Bacteria</taxon>
        <taxon>Bacillati</taxon>
        <taxon>Bacillota</taxon>
        <taxon>Bacilli</taxon>
        <taxon>Bacillales</taxon>
        <taxon>Staphylococcaceae</taxon>
        <taxon>Staphylococcus</taxon>
    </lineage>
</organism>
<keyword id="KW-0227">DNA damage</keyword>
<keyword id="KW-0233">DNA recombination</keyword>
<keyword id="KW-0234">DNA repair</keyword>